<accession>A5CX66</accession>
<organism>
    <name type="scientific">Vesicomyosocius okutanii subsp. Calyptogena okutanii (strain HA)</name>
    <dbReference type="NCBI Taxonomy" id="412965"/>
    <lineage>
        <taxon>Bacteria</taxon>
        <taxon>Pseudomonadati</taxon>
        <taxon>Pseudomonadota</taxon>
        <taxon>Gammaproteobacteria</taxon>
        <taxon>Candidatus Pseudothioglobaceae</taxon>
        <taxon>Candidatus Vesicomyosocius</taxon>
    </lineage>
</organism>
<protein>
    <recommendedName>
        <fullName evidence="1">Aspartyl/glutamyl-tRNA(Asn/Gln) amidotransferase subunit B</fullName>
        <shortName evidence="1">Asp/Glu-ADT subunit B</shortName>
        <ecNumber evidence="1">6.3.5.-</ecNumber>
    </recommendedName>
</protein>
<keyword id="KW-0067">ATP-binding</keyword>
<keyword id="KW-0436">Ligase</keyword>
<keyword id="KW-0547">Nucleotide-binding</keyword>
<keyword id="KW-0648">Protein biosynthesis</keyword>
<keyword id="KW-1185">Reference proteome</keyword>
<proteinExistence type="inferred from homology"/>
<reference key="1">
    <citation type="journal article" date="2007" name="Curr. Biol.">
        <title>Reduced genome of the thioautotrophic intracellular symbiont in a deep-sea clam, Calyptogena okutanii.</title>
        <authorList>
            <person name="Kuwahara H."/>
            <person name="Yoshida T."/>
            <person name="Takaki Y."/>
            <person name="Shimamura S."/>
            <person name="Nishi S."/>
            <person name="Harada M."/>
            <person name="Matsuyama K."/>
            <person name="Takishita K."/>
            <person name="Kawato M."/>
            <person name="Uematsu K."/>
            <person name="Fujiwara Y."/>
            <person name="Sato T."/>
            <person name="Kato C."/>
            <person name="Kitagawa M."/>
            <person name="Kato I."/>
            <person name="Maruyama T."/>
        </authorList>
    </citation>
    <scope>NUCLEOTIDE SEQUENCE [LARGE SCALE GENOMIC DNA]</scope>
    <source>
        <strain>HA</strain>
    </source>
</reference>
<comment type="function">
    <text evidence="1">Allows the formation of correctly charged Asn-tRNA(Asn) or Gln-tRNA(Gln) through the transamidation of misacylated Asp-tRNA(Asn) or Glu-tRNA(Gln) in organisms which lack either or both of asparaginyl-tRNA or glutaminyl-tRNA synthetases. The reaction takes place in the presence of glutamine and ATP through an activated phospho-Asp-tRNA(Asn) or phospho-Glu-tRNA(Gln).</text>
</comment>
<comment type="catalytic activity">
    <reaction evidence="1">
        <text>L-glutamyl-tRNA(Gln) + L-glutamine + ATP + H2O = L-glutaminyl-tRNA(Gln) + L-glutamate + ADP + phosphate + H(+)</text>
        <dbReference type="Rhea" id="RHEA:17521"/>
        <dbReference type="Rhea" id="RHEA-COMP:9681"/>
        <dbReference type="Rhea" id="RHEA-COMP:9684"/>
        <dbReference type="ChEBI" id="CHEBI:15377"/>
        <dbReference type="ChEBI" id="CHEBI:15378"/>
        <dbReference type="ChEBI" id="CHEBI:29985"/>
        <dbReference type="ChEBI" id="CHEBI:30616"/>
        <dbReference type="ChEBI" id="CHEBI:43474"/>
        <dbReference type="ChEBI" id="CHEBI:58359"/>
        <dbReference type="ChEBI" id="CHEBI:78520"/>
        <dbReference type="ChEBI" id="CHEBI:78521"/>
        <dbReference type="ChEBI" id="CHEBI:456216"/>
    </reaction>
</comment>
<comment type="catalytic activity">
    <reaction evidence="1">
        <text>L-aspartyl-tRNA(Asn) + L-glutamine + ATP + H2O = L-asparaginyl-tRNA(Asn) + L-glutamate + ADP + phosphate + 2 H(+)</text>
        <dbReference type="Rhea" id="RHEA:14513"/>
        <dbReference type="Rhea" id="RHEA-COMP:9674"/>
        <dbReference type="Rhea" id="RHEA-COMP:9677"/>
        <dbReference type="ChEBI" id="CHEBI:15377"/>
        <dbReference type="ChEBI" id="CHEBI:15378"/>
        <dbReference type="ChEBI" id="CHEBI:29985"/>
        <dbReference type="ChEBI" id="CHEBI:30616"/>
        <dbReference type="ChEBI" id="CHEBI:43474"/>
        <dbReference type="ChEBI" id="CHEBI:58359"/>
        <dbReference type="ChEBI" id="CHEBI:78515"/>
        <dbReference type="ChEBI" id="CHEBI:78516"/>
        <dbReference type="ChEBI" id="CHEBI:456216"/>
    </reaction>
</comment>
<comment type="subunit">
    <text evidence="1">Heterotrimer of A, B and C subunits.</text>
</comment>
<comment type="similarity">
    <text evidence="1">Belongs to the GatB/GatE family. GatB subfamily.</text>
</comment>
<gene>
    <name evidence="1" type="primary">gatB</name>
    <name type="ordered locus">COSY_0327</name>
</gene>
<name>GATB_VESOH</name>
<sequence length="476" mass="53990">MKWETVIGLEIHVQLNTKSKIFSSALTKYGKKPNSQACAIDLGLPGVLPVLNVEAVNKAIRFGVAINAHINKRNIFDRKNYFYPDLPKGYQISQMDWPIIGKGKIEIILGNQTKVICITRAHLEEDAGKSIHDMFDDNTAIDLNRAGIPLLEIVSEPDMRSAKEAVAYTKKIHTLVQYIDICDGNMQEGSFRCDANISIRPKGQKELGTRAELKNINSFKFLERAINFEVKRQKDILEEGEKVVQETRLYDSIKNETRSMRLKEETNDYRYFPDPDLLPIEISNELLEKVKQTLPELPDQRKTRFVVELGLSEYDADVLTSQKSLADYFEVMLEDNIVNIKLCANWVMGELSAALNKHQIDIQNSPITAPALSLLISRISDDTISVKTAKDVFKYMWDSKNSADEIIKVRGLKQMTNMVEIEVIIEQVIANSTLQVSQFKLGNNKILGFFIGKIMELTGGKVNPKQVNELLRKKLL</sequence>
<dbReference type="EC" id="6.3.5.-" evidence="1"/>
<dbReference type="EMBL" id="AP009247">
    <property type="protein sequence ID" value="BAF61452.1"/>
    <property type="molecule type" value="Genomic_DNA"/>
</dbReference>
<dbReference type="RefSeq" id="WP_011929722.1">
    <property type="nucleotide sequence ID" value="NC_009465.1"/>
</dbReference>
<dbReference type="SMR" id="A5CX66"/>
<dbReference type="STRING" id="412965.COSY_0327"/>
<dbReference type="KEGG" id="vok:COSY_0327"/>
<dbReference type="eggNOG" id="COG0064">
    <property type="taxonomic scope" value="Bacteria"/>
</dbReference>
<dbReference type="HOGENOM" id="CLU_019240_0_0_6"/>
<dbReference type="OrthoDB" id="9804078at2"/>
<dbReference type="Proteomes" id="UP000000247">
    <property type="component" value="Chromosome"/>
</dbReference>
<dbReference type="GO" id="GO:0050566">
    <property type="term" value="F:asparaginyl-tRNA synthase (glutamine-hydrolyzing) activity"/>
    <property type="evidence" value="ECO:0007669"/>
    <property type="project" value="RHEA"/>
</dbReference>
<dbReference type="GO" id="GO:0005524">
    <property type="term" value="F:ATP binding"/>
    <property type="evidence" value="ECO:0007669"/>
    <property type="project" value="UniProtKB-KW"/>
</dbReference>
<dbReference type="GO" id="GO:0050567">
    <property type="term" value="F:glutaminyl-tRNA synthase (glutamine-hydrolyzing) activity"/>
    <property type="evidence" value="ECO:0007669"/>
    <property type="project" value="UniProtKB-UniRule"/>
</dbReference>
<dbReference type="GO" id="GO:0070681">
    <property type="term" value="P:glutaminyl-tRNAGln biosynthesis via transamidation"/>
    <property type="evidence" value="ECO:0007669"/>
    <property type="project" value="TreeGrafter"/>
</dbReference>
<dbReference type="GO" id="GO:0006412">
    <property type="term" value="P:translation"/>
    <property type="evidence" value="ECO:0007669"/>
    <property type="project" value="UniProtKB-UniRule"/>
</dbReference>
<dbReference type="FunFam" id="1.10.10.410:FF:000001">
    <property type="entry name" value="Aspartyl/glutamyl-tRNA(Asn/Gln) amidotransferase subunit B"/>
    <property type="match status" value="1"/>
</dbReference>
<dbReference type="FunFam" id="1.10.150.380:FF:000001">
    <property type="entry name" value="Aspartyl/glutamyl-tRNA(Asn/Gln) amidotransferase subunit B"/>
    <property type="match status" value="1"/>
</dbReference>
<dbReference type="Gene3D" id="1.10.10.410">
    <property type="match status" value="1"/>
</dbReference>
<dbReference type="Gene3D" id="1.10.150.380">
    <property type="entry name" value="GatB domain, N-terminal subdomain"/>
    <property type="match status" value="1"/>
</dbReference>
<dbReference type="HAMAP" id="MF_00121">
    <property type="entry name" value="GatB"/>
    <property type="match status" value="1"/>
</dbReference>
<dbReference type="InterPro" id="IPR017959">
    <property type="entry name" value="Asn/Gln-tRNA_amidoTrfase_suB/E"/>
</dbReference>
<dbReference type="InterPro" id="IPR006075">
    <property type="entry name" value="Asn/Gln-tRNA_Trfase_suB/E_cat"/>
</dbReference>
<dbReference type="InterPro" id="IPR018027">
    <property type="entry name" value="Asn/Gln_amidotransferase"/>
</dbReference>
<dbReference type="InterPro" id="IPR003789">
    <property type="entry name" value="Asn/Gln_tRNA_amidoTrase-B-like"/>
</dbReference>
<dbReference type="InterPro" id="IPR004413">
    <property type="entry name" value="GatB"/>
</dbReference>
<dbReference type="InterPro" id="IPR042114">
    <property type="entry name" value="GatB_C_1"/>
</dbReference>
<dbReference type="InterPro" id="IPR023168">
    <property type="entry name" value="GatB_Yqey_C_2"/>
</dbReference>
<dbReference type="InterPro" id="IPR017958">
    <property type="entry name" value="Gln-tRNA_amidoTrfase_suB_CS"/>
</dbReference>
<dbReference type="InterPro" id="IPR014746">
    <property type="entry name" value="Gln_synth/guanido_kin_cat_dom"/>
</dbReference>
<dbReference type="NCBIfam" id="TIGR00133">
    <property type="entry name" value="gatB"/>
    <property type="match status" value="1"/>
</dbReference>
<dbReference type="NCBIfam" id="NF004012">
    <property type="entry name" value="PRK05477.1-2"/>
    <property type="match status" value="1"/>
</dbReference>
<dbReference type="NCBIfam" id="NF004014">
    <property type="entry name" value="PRK05477.1-4"/>
    <property type="match status" value="1"/>
</dbReference>
<dbReference type="NCBIfam" id="NF004015">
    <property type="entry name" value="PRK05477.1-5"/>
    <property type="match status" value="1"/>
</dbReference>
<dbReference type="PANTHER" id="PTHR11659">
    <property type="entry name" value="GLUTAMYL-TRNA GLN AMIDOTRANSFERASE SUBUNIT B MITOCHONDRIAL AND PROKARYOTIC PET112-RELATED"/>
    <property type="match status" value="1"/>
</dbReference>
<dbReference type="PANTHER" id="PTHR11659:SF0">
    <property type="entry name" value="GLUTAMYL-TRNA(GLN) AMIDOTRANSFERASE SUBUNIT B, MITOCHONDRIAL"/>
    <property type="match status" value="1"/>
</dbReference>
<dbReference type="Pfam" id="PF02934">
    <property type="entry name" value="GatB_N"/>
    <property type="match status" value="1"/>
</dbReference>
<dbReference type="Pfam" id="PF02637">
    <property type="entry name" value="GatB_Yqey"/>
    <property type="match status" value="1"/>
</dbReference>
<dbReference type="SMART" id="SM00845">
    <property type="entry name" value="GatB_Yqey"/>
    <property type="match status" value="1"/>
</dbReference>
<dbReference type="SUPFAM" id="SSF89095">
    <property type="entry name" value="GatB/YqeY motif"/>
    <property type="match status" value="1"/>
</dbReference>
<dbReference type="SUPFAM" id="SSF55931">
    <property type="entry name" value="Glutamine synthetase/guanido kinase"/>
    <property type="match status" value="1"/>
</dbReference>
<dbReference type="PROSITE" id="PS01234">
    <property type="entry name" value="GATB"/>
    <property type="match status" value="1"/>
</dbReference>
<feature type="chain" id="PRO_1000016056" description="Aspartyl/glutamyl-tRNA(Asn/Gln) amidotransferase subunit B">
    <location>
        <begin position="1"/>
        <end position="476"/>
    </location>
</feature>
<evidence type="ECO:0000255" key="1">
    <source>
        <dbReference type="HAMAP-Rule" id="MF_00121"/>
    </source>
</evidence>